<evidence type="ECO:0000250" key="1">
    <source>
        <dbReference type="UniProtKB" id="Q58746"/>
    </source>
</evidence>
<evidence type="ECO:0000255" key="2"/>
<evidence type="ECO:0000255" key="3">
    <source>
        <dbReference type="PROSITE-ProRule" id="PRU00711"/>
    </source>
</evidence>
<evidence type="ECO:0000303" key="4">
    <source>
    </source>
</evidence>
<evidence type="ECO:0000305" key="5"/>
<evidence type="ECO:0000312" key="6">
    <source>
        <dbReference type="EMBL" id="AAW39579.1"/>
    </source>
</evidence>
<accession>Q3Z7F6</accession>
<reference evidence="6" key="1">
    <citation type="journal article" date="2005" name="Science">
        <title>Genome sequence of the PCE-dechlorinating bacterium Dehalococcoides ethenogenes.</title>
        <authorList>
            <person name="Seshadri R."/>
            <person name="Adrian L."/>
            <person name="Fouts D.E."/>
            <person name="Eisen J.A."/>
            <person name="Phillippy A.M."/>
            <person name="Methe B.A."/>
            <person name="Ward N.L."/>
            <person name="Nelson W.C."/>
            <person name="DeBoy R.T."/>
            <person name="Khouri H.M."/>
            <person name="Kolonay J.F."/>
            <person name="Dodson R.J."/>
            <person name="Daugherty S.C."/>
            <person name="Brinkac L.M."/>
            <person name="Sullivan S.A."/>
            <person name="Madupu R."/>
            <person name="Nelson K.E."/>
            <person name="Kang K.H."/>
            <person name="Impraim M."/>
            <person name="Tran K."/>
            <person name="Robinson J.M."/>
            <person name="Forberger H.A."/>
            <person name="Fraser C.M."/>
            <person name="Zinder S.H."/>
            <person name="Heidelberg J.F."/>
        </authorList>
    </citation>
    <scope>NUCLEOTIDE SEQUENCE [LARGE SCALE GENOMIC DNA]</scope>
    <source>
        <strain>ATCC BAA-2266 / KCTC 15142 / 195</strain>
    </source>
</reference>
<reference evidence="5" key="2">
    <citation type="journal article" date="2001" name="Mol. Biol. Evol.">
        <title>Phylogenetic analyses of two 'archaeal' genes in thermotoga maritima reveal multiple transfers between archaea and bacteria.</title>
        <authorList>
            <person name="Nesbo C.L."/>
            <person name="L'Haridon S."/>
            <person name="Stetter K.O."/>
            <person name="Doolittle W.F."/>
        </authorList>
    </citation>
    <scope>PHYLOGENETIC STUDY</scope>
</reference>
<name>AGLUS_DEHM1</name>
<dbReference type="EC" id="1.4.1.13" evidence="1"/>
<dbReference type="EMBL" id="CP000027">
    <property type="protein sequence ID" value="AAW39579.1"/>
    <property type="molecule type" value="Genomic_DNA"/>
</dbReference>
<dbReference type="RefSeq" id="WP_010936821.1">
    <property type="nucleotide sequence ID" value="NC_002936.3"/>
</dbReference>
<dbReference type="SMR" id="Q3Z7F6"/>
<dbReference type="FunCoup" id="Q3Z7F6">
    <property type="interactions" value="12"/>
</dbReference>
<dbReference type="STRING" id="243164.DET1128"/>
<dbReference type="GeneID" id="3229540"/>
<dbReference type="KEGG" id="det:DET1128"/>
<dbReference type="PATRIC" id="fig|243164.10.peg.1060"/>
<dbReference type="eggNOG" id="COG0069">
    <property type="taxonomic scope" value="Bacteria"/>
</dbReference>
<dbReference type="HOGENOM" id="CLU_023342_1_1_0"/>
<dbReference type="InParanoid" id="Q3Z7F6"/>
<dbReference type="Proteomes" id="UP000008289">
    <property type="component" value="Chromosome"/>
</dbReference>
<dbReference type="GO" id="GO:0051539">
    <property type="term" value="F:4 iron, 4 sulfur cluster binding"/>
    <property type="evidence" value="ECO:0007669"/>
    <property type="project" value="UniProtKB-KW"/>
</dbReference>
<dbReference type="GO" id="GO:0004355">
    <property type="term" value="F:glutamate synthase (NADPH) activity"/>
    <property type="evidence" value="ECO:0007669"/>
    <property type="project" value="UniProtKB-EC"/>
</dbReference>
<dbReference type="GO" id="GO:0046872">
    <property type="term" value="F:metal ion binding"/>
    <property type="evidence" value="ECO:0007669"/>
    <property type="project" value="UniProtKB-KW"/>
</dbReference>
<dbReference type="GO" id="GO:0006537">
    <property type="term" value="P:glutamate biosynthetic process"/>
    <property type="evidence" value="ECO:0007669"/>
    <property type="project" value="UniProtKB-KW"/>
</dbReference>
<dbReference type="CDD" id="cd02808">
    <property type="entry name" value="GltS_FMN"/>
    <property type="match status" value="1"/>
</dbReference>
<dbReference type="Gene3D" id="3.30.70.20">
    <property type="match status" value="1"/>
</dbReference>
<dbReference type="Gene3D" id="3.20.20.70">
    <property type="entry name" value="Aldolase class I"/>
    <property type="match status" value="1"/>
</dbReference>
<dbReference type="InterPro" id="IPR017896">
    <property type="entry name" value="4Fe4S_Fe-S-bd"/>
</dbReference>
<dbReference type="InterPro" id="IPR017900">
    <property type="entry name" value="4Fe4S_Fe_S_CS"/>
</dbReference>
<dbReference type="InterPro" id="IPR013785">
    <property type="entry name" value="Aldolase_TIM"/>
</dbReference>
<dbReference type="InterPro" id="IPR024188">
    <property type="entry name" value="GltB"/>
</dbReference>
<dbReference type="InterPro" id="IPR043578">
    <property type="entry name" value="GltB_archl_type"/>
</dbReference>
<dbReference type="InterPro" id="IPR002932">
    <property type="entry name" value="Glu_synthdom"/>
</dbReference>
<dbReference type="PANTHER" id="PTHR43819">
    <property type="entry name" value="ARCHAEAL-TYPE GLUTAMATE SYNTHASE [NADPH]"/>
    <property type="match status" value="1"/>
</dbReference>
<dbReference type="PANTHER" id="PTHR43819:SF1">
    <property type="entry name" value="ARCHAEAL-TYPE GLUTAMATE SYNTHASE [NADPH]"/>
    <property type="match status" value="1"/>
</dbReference>
<dbReference type="Pfam" id="PF12838">
    <property type="entry name" value="Fer4_7"/>
    <property type="match status" value="1"/>
</dbReference>
<dbReference type="Pfam" id="PF01645">
    <property type="entry name" value="Glu_synthase"/>
    <property type="match status" value="1"/>
</dbReference>
<dbReference type="PIRSF" id="PIRSF500061">
    <property type="entry name" value="GOGAT_lg2_archl"/>
    <property type="match status" value="1"/>
</dbReference>
<dbReference type="PIRSF" id="PIRSF006429">
    <property type="entry name" value="GOGAT_lg_2"/>
    <property type="match status" value="1"/>
</dbReference>
<dbReference type="SUPFAM" id="SSF54862">
    <property type="entry name" value="4Fe-4S ferredoxins"/>
    <property type="match status" value="1"/>
</dbReference>
<dbReference type="SUPFAM" id="SSF51395">
    <property type="entry name" value="FMN-linked oxidoreductases"/>
    <property type="match status" value="1"/>
</dbReference>
<dbReference type="PROSITE" id="PS00198">
    <property type="entry name" value="4FE4S_FER_1"/>
    <property type="match status" value="1"/>
</dbReference>
<dbReference type="PROSITE" id="PS51379">
    <property type="entry name" value="4FE4S_FER_2"/>
    <property type="match status" value="2"/>
</dbReference>
<organism>
    <name type="scientific">Dehalococcoides mccartyi (strain ATCC BAA-2266 / KCTC 15142 / 195)</name>
    <name type="common">Dehalococcoides ethenogenes (strain 195)</name>
    <dbReference type="NCBI Taxonomy" id="243164"/>
    <lineage>
        <taxon>Bacteria</taxon>
        <taxon>Bacillati</taxon>
        <taxon>Chloroflexota</taxon>
        <taxon>Dehalococcoidia</taxon>
        <taxon>Dehalococcoidales</taxon>
        <taxon>Dehalococcoidaceae</taxon>
        <taxon>Dehalococcoides</taxon>
    </lineage>
</organism>
<proteinExistence type="inferred from homology"/>
<sequence>MKTFLPSKFIVDRIEDRCIKCKVCITQCSFDTHYYDEDDDQIKVRNQNCVGCHRCVTFCPTNALVVRNNPLEYRQNANWTPEMIEDIFKQAETGGVLLTGMGMDKAKPIYWDKLLINASQVTNPSIDPLREPMELTTYLGRRPDKAAFDNCGNVEENITPLVKIDVPVMFSAMSYGAISLNVHRSLAQAAKNMGTMWNTGEGGLHSSLMEFKDNTIVQVASGRYGVQNDYLNSGRIVEIKIGQGAKPGIGGHLPGEKVSADVSLTRMIPMGTDAISPAPQHDIYSIEDLSQLIYALKEATHYRVPISVKIAAVHNVSAIASGIVRAGADIVTIDGMRGATGAAPKVIRDNVGIPIELALAAVDSRLREEGIRNQASLVISGGIRNSGDVFKAIALGADAVNIGTAALVALGCHLCQQCHTGKCAWGICTSDLALTKRINPEIGAKRLTNLLRGWSLEIKDMLGGLGVNAIESLRGNRLHLRGVGLSAEELKILGVRAAGE</sequence>
<keyword id="KW-0004">4Fe-4S</keyword>
<keyword id="KW-0028">Amino-acid biosynthesis</keyword>
<keyword id="KW-0285">Flavoprotein</keyword>
<keyword id="KW-0288">FMN</keyword>
<keyword id="KW-0314">Glutamate biosynthesis</keyword>
<keyword id="KW-0408">Iron</keyword>
<keyword id="KW-0411">Iron-sulfur</keyword>
<keyword id="KW-0479">Metal-binding</keyword>
<keyword id="KW-0521">NADP</keyword>
<keyword id="KW-0560">Oxidoreductase</keyword>
<keyword id="KW-0677">Repeat</keyword>
<comment type="catalytic activity">
    <reaction evidence="1">
        <text>2 L-glutamate + NADP(+) = L-glutamine + 2-oxoglutarate + NADPH + H(+)</text>
        <dbReference type="Rhea" id="RHEA:15501"/>
        <dbReference type="ChEBI" id="CHEBI:15378"/>
        <dbReference type="ChEBI" id="CHEBI:16810"/>
        <dbReference type="ChEBI" id="CHEBI:29985"/>
        <dbReference type="ChEBI" id="CHEBI:57783"/>
        <dbReference type="ChEBI" id="CHEBI:58349"/>
        <dbReference type="ChEBI" id="CHEBI:58359"/>
        <dbReference type="EC" id="1.4.1.13"/>
    </reaction>
</comment>
<comment type="cofactor">
    <cofactor evidence="1">
        <name>FMN</name>
        <dbReference type="ChEBI" id="CHEBI:58210"/>
    </cofactor>
</comment>
<comment type="similarity">
    <text evidence="2">Belongs to the glutamate synthase family.</text>
</comment>
<protein>
    <recommendedName>
        <fullName evidence="4 6">Archaeal-type glutamate synthase [NADPH]</fullName>
        <ecNumber evidence="1">1.4.1.13</ecNumber>
    </recommendedName>
    <alternativeName>
        <fullName evidence="1">Archaeal-type NADPH-GOGAT</fullName>
    </alternativeName>
</protein>
<feature type="chain" id="PRO_0000420607" description="Archaeal-type glutamate synthase [NADPH]">
    <location>
        <begin position="1"/>
        <end position="500"/>
    </location>
</feature>
<feature type="domain" description="4Fe-4S ferredoxin-type 1" evidence="3">
    <location>
        <begin position="7"/>
        <end position="38"/>
    </location>
</feature>
<feature type="domain" description="4Fe-4S ferredoxin-type 2" evidence="3">
    <location>
        <begin position="40"/>
        <end position="69"/>
    </location>
</feature>
<feature type="binding site" evidence="1">
    <location>
        <position position="18"/>
    </location>
    <ligand>
        <name>[4Fe-4S] cluster</name>
        <dbReference type="ChEBI" id="CHEBI:49883"/>
        <label>1</label>
    </ligand>
</feature>
<feature type="binding site" evidence="1">
    <location>
        <position position="21"/>
    </location>
    <ligand>
        <name>[4Fe-4S] cluster</name>
        <dbReference type="ChEBI" id="CHEBI:49883"/>
        <label>1</label>
    </ligand>
</feature>
<feature type="binding site" evidence="1">
    <location>
        <position position="24"/>
    </location>
    <ligand>
        <name>[4Fe-4S] cluster</name>
        <dbReference type="ChEBI" id="CHEBI:49883"/>
        <label>1</label>
    </ligand>
</feature>
<feature type="binding site" evidence="1">
    <location>
        <position position="28"/>
    </location>
    <ligand>
        <name>[4Fe-4S] cluster</name>
        <dbReference type="ChEBI" id="CHEBI:49883"/>
        <label>2</label>
    </ligand>
</feature>
<feature type="binding site" evidence="1">
    <location>
        <position position="49"/>
    </location>
    <ligand>
        <name>[4Fe-4S] cluster</name>
        <dbReference type="ChEBI" id="CHEBI:49883"/>
        <label>2</label>
    </ligand>
</feature>
<feature type="binding site" evidence="1">
    <location>
        <position position="52"/>
    </location>
    <ligand>
        <name>[4Fe-4S] cluster</name>
        <dbReference type="ChEBI" id="CHEBI:49883"/>
        <label>2</label>
    </ligand>
</feature>
<feature type="binding site" evidence="1">
    <location>
        <position position="55"/>
    </location>
    <ligand>
        <name>[4Fe-4S] cluster</name>
        <dbReference type="ChEBI" id="CHEBI:49883"/>
        <label>2</label>
    </ligand>
</feature>
<feature type="binding site" evidence="1">
    <location>
        <position position="59"/>
    </location>
    <ligand>
        <name>[4Fe-4S] cluster</name>
        <dbReference type="ChEBI" id="CHEBI:49883"/>
        <label>1</label>
    </ligand>
</feature>
<gene>
    <name evidence="4" type="primary">gltB</name>
    <name type="ordered locus">DET1128</name>
</gene>